<accession>P64211</accession>
<accession>Q8YCG9</accession>
<evidence type="ECO:0000255" key="1">
    <source>
        <dbReference type="HAMAP-Rule" id="MF_00272"/>
    </source>
</evidence>
<evidence type="ECO:0000255" key="2">
    <source>
        <dbReference type="PROSITE-ProRule" id="PRU01066"/>
    </source>
</evidence>
<comment type="function">
    <text evidence="1">The glycine cleavage system catalyzes the degradation of glycine. The H protein shuttles the methylamine group of glycine from the P protein to the T protein.</text>
</comment>
<comment type="cofactor">
    <cofactor evidence="1">
        <name>(R)-lipoate</name>
        <dbReference type="ChEBI" id="CHEBI:83088"/>
    </cofactor>
    <text evidence="1">Binds 1 lipoyl cofactor covalently.</text>
</comment>
<comment type="subunit">
    <text evidence="1">The glycine cleavage system is composed of four proteins: P, T, L and H.</text>
</comment>
<comment type="similarity">
    <text evidence="1">Belongs to the GcvH family.</text>
</comment>
<sequence>MISMANILFTEDHEWINVENGVATVGITIHAQEQLGDLVFVELPEVGRTVAKGDGVVVVESVKAASDVYAPVDGEVVEVNDAVASDPSLINQAAEGEGWLFKLKLADEGQLTGLLDKAGYEKLIG</sequence>
<name>GCSH_BRUME</name>
<protein>
    <recommendedName>
        <fullName evidence="1">Glycine cleavage system H protein</fullName>
    </recommendedName>
</protein>
<reference key="1">
    <citation type="journal article" date="2002" name="Proc. Natl. Acad. Sci. U.S.A.">
        <title>The genome sequence of the facultative intracellular pathogen Brucella melitensis.</title>
        <authorList>
            <person name="DelVecchio V.G."/>
            <person name="Kapatral V."/>
            <person name="Redkar R.J."/>
            <person name="Patra G."/>
            <person name="Mujer C."/>
            <person name="Los T."/>
            <person name="Ivanova N."/>
            <person name="Anderson I."/>
            <person name="Bhattacharyya A."/>
            <person name="Lykidis A."/>
            <person name="Reznik G."/>
            <person name="Jablonski L."/>
            <person name="Larsen N."/>
            <person name="D'Souza M."/>
            <person name="Bernal A."/>
            <person name="Mazur M."/>
            <person name="Goltsman E."/>
            <person name="Selkov E."/>
            <person name="Elzer P.H."/>
            <person name="Hagius S."/>
            <person name="O'Callaghan D."/>
            <person name="Letesson J.-J."/>
            <person name="Haselkorn R."/>
            <person name="Kyrpides N.C."/>
            <person name="Overbeek R."/>
        </authorList>
    </citation>
    <scope>NUCLEOTIDE SEQUENCE [LARGE SCALE GENOMIC DNA]</scope>
    <source>
        <strain>ATCC 23456 / CCUG 17765 / NCTC 10094 / 16M</strain>
    </source>
</reference>
<dbReference type="EMBL" id="AE008918">
    <property type="protein sequence ID" value="AAL53802.1"/>
    <property type="molecule type" value="Genomic_DNA"/>
</dbReference>
<dbReference type="PIR" id="AG3579">
    <property type="entry name" value="AG3579"/>
</dbReference>
<dbReference type="SMR" id="P64211"/>
<dbReference type="KEGG" id="bme:BMEII0560"/>
<dbReference type="eggNOG" id="COG0509">
    <property type="taxonomic scope" value="Bacteria"/>
</dbReference>
<dbReference type="Proteomes" id="UP000000419">
    <property type="component" value="Chromosome II"/>
</dbReference>
<dbReference type="GO" id="GO:0005829">
    <property type="term" value="C:cytosol"/>
    <property type="evidence" value="ECO:0007669"/>
    <property type="project" value="TreeGrafter"/>
</dbReference>
<dbReference type="GO" id="GO:0005960">
    <property type="term" value="C:glycine cleavage complex"/>
    <property type="evidence" value="ECO:0007669"/>
    <property type="project" value="InterPro"/>
</dbReference>
<dbReference type="GO" id="GO:0019464">
    <property type="term" value="P:glycine decarboxylation via glycine cleavage system"/>
    <property type="evidence" value="ECO:0007669"/>
    <property type="project" value="UniProtKB-UniRule"/>
</dbReference>
<dbReference type="CDD" id="cd06848">
    <property type="entry name" value="GCS_H"/>
    <property type="match status" value="1"/>
</dbReference>
<dbReference type="Gene3D" id="2.40.50.100">
    <property type="match status" value="1"/>
</dbReference>
<dbReference type="HAMAP" id="MF_00272">
    <property type="entry name" value="GcvH"/>
    <property type="match status" value="1"/>
</dbReference>
<dbReference type="InterPro" id="IPR003016">
    <property type="entry name" value="2-oxoA_DH_lipoyl-BS"/>
</dbReference>
<dbReference type="InterPro" id="IPR000089">
    <property type="entry name" value="Biotin_lipoyl"/>
</dbReference>
<dbReference type="InterPro" id="IPR002930">
    <property type="entry name" value="GCV_H"/>
</dbReference>
<dbReference type="InterPro" id="IPR033753">
    <property type="entry name" value="GCV_H/Fam206"/>
</dbReference>
<dbReference type="InterPro" id="IPR017453">
    <property type="entry name" value="GCV_H_sub"/>
</dbReference>
<dbReference type="InterPro" id="IPR011053">
    <property type="entry name" value="Single_hybrid_motif"/>
</dbReference>
<dbReference type="NCBIfam" id="TIGR00527">
    <property type="entry name" value="gcvH"/>
    <property type="match status" value="1"/>
</dbReference>
<dbReference type="NCBIfam" id="NF002270">
    <property type="entry name" value="PRK01202.1"/>
    <property type="match status" value="1"/>
</dbReference>
<dbReference type="PANTHER" id="PTHR11715">
    <property type="entry name" value="GLYCINE CLEAVAGE SYSTEM H PROTEIN"/>
    <property type="match status" value="1"/>
</dbReference>
<dbReference type="PANTHER" id="PTHR11715:SF3">
    <property type="entry name" value="GLYCINE CLEAVAGE SYSTEM H PROTEIN-RELATED"/>
    <property type="match status" value="1"/>
</dbReference>
<dbReference type="Pfam" id="PF01597">
    <property type="entry name" value="GCV_H"/>
    <property type="match status" value="1"/>
</dbReference>
<dbReference type="SUPFAM" id="SSF51230">
    <property type="entry name" value="Single hybrid motif"/>
    <property type="match status" value="1"/>
</dbReference>
<dbReference type="PROSITE" id="PS50968">
    <property type="entry name" value="BIOTINYL_LIPOYL"/>
    <property type="match status" value="1"/>
</dbReference>
<dbReference type="PROSITE" id="PS00189">
    <property type="entry name" value="LIPOYL"/>
    <property type="match status" value="1"/>
</dbReference>
<organism>
    <name type="scientific">Brucella melitensis biotype 1 (strain ATCC 23456 / CCUG 17765 / NCTC 10094 / 16M)</name>
    <dbReference type="NCBI Taxonomy" id="224914"/>
    <lineage>
        <taxon>Bacteria</taxon>
        <taxon>Pseudomonadati</taxon>
        <taxon>Pseudomonadota</taxon>
        <taxon>Alphaproteobacteria</taxon>
        <taxon>Hyphomicrobiales</taxon>
        <taxon>Brucellaceae</taxon>
        <taxon>Brucella/Ochrobactrum group</taxon>
        <taxon>Brucella</taxon>
    </lineage>
</organism>
<gene>
    <name evidence="1" type="primary">gcvH</name>
    <name type="ordered locus">BMEII0560</name>
</gene>
<keyword id="KW-0450">Lipoyl</keyword>
<proteinExistence type="inferred from homology"/>
<feature type="chain" id="PRO_0000166209" description="Glycine cleavage system H protein">
    <location>
        <begin position="1"/>
        <end position="125"/>
    </location>
</feature>
<feature type="domain" description="Lipoyl-binding" evidence="2">
    <location>
        <begin position="22"/>
        <end position="104"/>
    </location>
</feature>
<feature type="modified residue" description="N6-lipoyllysine" evidence="1">
    <location>
        <position position="63"/>
    </location>
</feature>